<keyword id="KW-0002">3D-structure</keyword>
<keyword id="KW-1003">Cell membrane</keyword>
<keyword id="KW-0297">G-protein coupled receptor</keyword>
<keyword id="KW-0325">Glycoprotein</keyword>
<keyword id="KW-0472">Membrane</keyword>
<keyword id="KW-0597">Phosphoprotein</keyword>
<keyword id="KW-1267">Proteomics identification</keyword>
<keyword id="KW-0675">Receptor</keyword>
<keyword id="KW-1185">Reference proteome</keyword>
<keyword id="KW-0807">Transducer</keyword>
<keyword id="KW-0812">Transmembrane</keyword>
<keyword id="KW-1133">Transmembrane helix</keyword>
<feature type="chain" id="PRO_0000069421" description="Sphingosine 1-phosphate receptor 3">
    <location>
        <begin position="1"/>
        <end position="378"/>
    </location>
</feature>
<feature type="topological domain" description="Extracellular" evidence="1">
    <location>
        <begin position="1"/>
        <end position="40"/>
    </location>
</feature>
<feature type="transmembrane region" description="Helical; Name=1" evidence="1">
    <location>
        <begin position="41"/>
        <end position="65"/>
    </location>
</feature>
<feature type="topological domain" description="Cytoplasmic" evidence="1">
    <location>
        <begin position="66"/>
        <end position="72"/>
    </location>
</feature>
<feature type="transmembrane region" description="Helical; Name=2" evidence="1">
    <location>
        <begin position="73"/>
        <end position="101"/>
    </location>
</feature>
<feature type="topological domain" description="Extracellular" evidence="1">
    <location>
        <begin position="102"/>
        <end position="115"/>
    </location>
</feature>
<feature type="transmembrane region" description="Helical; Name=3" evidence="1">
    <location>
        <begin position="116"/>
        <end position="134"/>
    </location>
</feature>
<feature type="topological domain" description="Cytoplasmic" evidence="1">
    <location>
        <begin position="135"/>
        <end position="153"/>
    </location>
</feature>
<feature type="transmembrane region" description="Helical; Name=4" evidence="1">
    <location>
        <begin position="154"/>
        <end position="179"/>
    </location>
</feature>
<feature type="topological domain" description="Extracellular" evidence="1">
    <location>
        <begin position="180"/>
        <end position="195"/>
    </location>
</feature>
<feature type="transmembrane region" description="Helical; Name=5" evidence="1">
    <location>
        <begin position="196"/>
        <end position="216"/>
    </location>
</feature>
<feature type="topological domain" description="Cytoplasmic" evidence="1">
    <location>
        <begin position="217"/>
        <end position="243"/>
    </location>
</feature>
<feature type="transmembrane region" description="Helical; Name=6" evidence="1">
    <location>
        <begin position="244"/>
        <end position="265"/>
    </location>
</feature>
<feature type="topological domain" description="Extracellular" evidence="1">
    <location>
        <begin position="266"/>
        <end position="281"/>
    </location>
</feature>
<feature type="transmembrane region" description="Helical; Name=7" evidence="1">
    <location>
        <begin position="282"/>
        <end position="302"/>
    </location>
</feature>
<feature type="topological domain" description="Cytoplasmic" evidence="1">
    <location>
        <begin position="303"/>
        <end position="378"/>
    </location>
</feature>
<feature type="region of interest" description="Disordered" evidence="4">
    <location>
        <begin position="327"/>
        <end position="357"/>
    </location>
</feature>
<feature type="compositionally biased region" description="Low complexity" evidence="4">
    <location>
        <begin position="337"/>
        <end position="348"/>
    </location>
</feature>
<feature type="modified residue" description="Phosphoserine" evidence="8">
    <location>
        <position position="326"/>
    </location>
</feature>
<feature type="glycosylation site" description="N-linked (GlcNAc...) asparagine" evidence="2">
    <location>
        <position position="15"/>
    </location>
</feature>
<feature type="sequence variant" id="VAR_033465" description="In dbSNP:rs34075341.">
    <original>R</original>
    <variation>Q</variation>
    <location>
        <position position="243"/>
    </location>
</feature>
<feature type="sequence conflict" description="In Ref. 1; CAA58744 and 2; AAC51906." evidence="6" ref="1 2">
    <original>A</original>
    <variation>D</variation>
    <location>
        <position position="359"/>
    </location>
</feature>
<feature type="helix" evidence="10">
    <location>
        <begin position="17"/>
        <end position="25"/>
    </location>
</feature>
<feature type="strand" evidence="10">
    <location>
        <begin position="26"/>
        <end position="28"/>
    </location>
</feature>
<feature type="helix" evidence="10">
    <location>
        <begin position="41"/>
        <end position="66"/>
    </location>
</feature>
<feature type="helix" evidence="10">
    <location>
        <begin position="74"/>
        <end position="99"/>
    </location>
</feature>
<feature type="turn" evidence="10">
    <location>
        <begin position="103"/>
        <end position="105"/>
    </location>
</feature>
<feature type="helix" evidence="10">
    <location>
        <begin position="108"/>
        <end position="139"/>
    </location>
</feature>
<feature type="turn" evidence="9">
    <location>
        <begin position="149"/>
        <end position="151"/>
    </location>
</feature>
<feature type="helix" evidence="10">
    <location>
        <begin position="152"/>
        <end position="169"/>
    </location>
</feature>
<feature type="helix" evidence="10">
    <location>
        <begin position="172"/>
        <end position="174"/>
    </location>
</feature>
<feature type="strand" evidence="12">
    <location>
        <begin position="179"/>
        <end position="181"/>
    </location>
</feature>
<feature type="strand" evidence="10">
    <location>
        <begin position="182"/>
        <end position="185"/>
    </location>
</feature>
<feature type="strand" evidence="10">
    <location>
        <begin position="187"/>
        <end position="189"/>
    </location>
</feature>
<feature type="helix" evidence="10">
    <location>
        <begin position="194"/>
        <end position="228"/>
    </location>
</feature>
<feature type="helix" evidence="10">
    <location>
        <begin position="232"/>
        <end position="268"/>
    </location>
</feature>
<feature type="turn" evidence="10">
    <location>
        <begin position="271"/>
        <end position="273"/>
    </location>
</feature>
<feature type="helix" evidence="10">
    <location>
        <begin position="275"/>
        <end position="280"/>
    </location>
</feature>
<feature type="helix" evidence="10">
    <location>
        <begin position="281"/>
        <end position="290"/>
    </location>
</feature>
<feature type="turn" evidence="10">
    <location>
        <begin position="291"/>
        <end position="293"/>
    </location>
</feature>
<feature type="helix" evidence="10">
    <location>
        <begin position="294"/>
        <end position="298"/>
    </location>
</feature>
<feature type="strand" evidence="11">
    <location>
        <begin position="300"/>
        <end position="302"/>
    </location>
</feature>
<feature type="helix" evidence="10">
    <location>
        <begin position="303"/>
        <end position="311"/>
    </location>
</feature>
<proteinExistence type="evidence at protein level"/>
<name>S1PR3_HUMAN</name>
<accession>Q99500</accession>
<accession>Q5SQD8</accession>
<accession>Q7Z5I2</accession>
<organism>
    <name type="scientific">Homo sapiens</name>
    <name type="common">Human</name>
    <dbReference type="NCBI Taxonomy" id="9606"/>
    <lineage>
        <taxon>Eukaryota</taxon>
        <taxon>Metazoa</taxon>
        <taxon>Chordata</taxon>
        <taxon>Craniata</taxon>
        <taxon>Vertebrata</taxon>
        <taxon>Euteleostomi</taxon>
        <taxon>Mammalia</taxon>
        <taxon>Eutheria</taxon>
        <taxon>Euarchontoglires</taxon>
        <taxon>Primates</taxon>
        <taxon>Haplorrhini</taxon>
        <taxon>Catarrhini</taxon>
        <taxon>Hominidae</taxon>
        <taxon>Homo</taxon>
    </lineage>
</organism>
<dbReference type="EMBL" id="X83864">
    <property type="protein sequence ID" value="CAA58744.1"/>
    <property type="molecule type" value="Genomic_DNA"/>
</dbReference>
<dbReference type="EMBL" id="AF022139">
    <property type="protein sequence ID" value="AAC51906.1"/>
    <property type="molecule type" value="mRNA"/>
</dbReference>
<dbReference type="EMBL" id="AY322540">
    <property type="protein sequence ID" value="AAP84353.1"/>
    <property type="molecule type" value="Genomic_DNA"/>
</dbReference>
<dbReference type="EMBL" id="AK312798">
    <property type="protein sequence ID" value="BAG35658.1"/>
    <property type="molecule type" value="mRNA"/>
</dbReference>
<dbReference type="EMBL" id="AL772202">
    <property type="status" value="NOT_ANNOTATED_CDS"/>
    <property type="molecule type" value="Genomic_DNA"/>
</dbReference>
<dbReference type="EMBL" id="CH471089">
    <property type="protein sequence ID" value="EAW62758.1"/>
    <property type="molecule type" value="Genomic_DNA"/>
</dbReference>
<dbReference type="EMBL" id="BC060827">
    <property type="protein sequence ID" value="AAH60827.1"/>
    <property type="molecule type" value="mRNA"/>
</dbReference>
<dbReference type="EMBL" id="BC069579">
    <property type="protein sequence ID" value="AAH69579.1"/>
    <property type="molecule type" value="mRNA"/>
</dbReference>
<dbReference type="CCDS" id="CCDS6680.1"/>
<dbReference type="PIR" id="JC5245">
    <property type="entry name" value="JC5245"/>
</dbReference>
<dbReference type="RefSeq" id="NP_001382777.1">
    <property type="nucleotide sequence ID" value="NM_001395848.1"/>
</dbReference>
<dbReference type="RefSeq" id="NP_005217.2">
    <property type="nucleotide sequence ID" value="NM_005226.3"/>
</dbReference>
<dbReference type="PDB" id="7C4S">
    <property type="method" value="X-ray"/>
    <property type="resolution" value="3.20 A"/>
    <property type="chains" value="A/B=1-378"/>
</dbReference>
<dbReference type="PDB" id="7EW2">
    <property type="method" value="EM"/>
    <property type="resolution" value="3.10 A"/>
    <property type="chains" value="R=1-378"/>
</dbReference>
<dbReference type="PDB" id="7EW3">
    <property type="method" value="EM"/>
    <property type="resolution" value="3.10 A"/>
    <property type="chains" value="R=1-378"/>
</dbReference>
<dbReference type="PDB" id="7EW4">
    <property type="method" value="EM"/>
    <property type="resolution" value="3.20 A"/>
    <property type="chains" value="R=1-378"/>
</dbReference>
<dbReference type="PDBsum" id="7C4S"/>
<dbReference type="PDBsum" id="7EW2"/>
<dbReference type="PDBsum" id="7EW3"/>
<dbReference type="PDBsum" id="7EW4"/>
<dbReference type="EMDB" id="EMD-31345"/>
<dbReference type="EMDB" id="EMD-31346"/>
<dbReference type="EMDB" id="EMD-31347"/>
<dbReference type="SMR" id="Q99500"/>
<dbReference type="BioGRID" id="108227">
    <property type="interactions" value="40"/>
</dbReference>
<dbReference type="CORUM" id="Q99500"/>
<dbReference type="FunCoup" id="Q99500">
    <property type="interactions" value="1277"/>
</dbReference>
<dbReference type="IntAct" id="Q99500">
    <property type="interactions" value="10"/>
</dbReference>
<dbReference type="MINT" id="Q99500"/>
<dbReference type="STRING" id="9606.ENSP00000365006"/>
<dbReference type="BindingDB" id="Q99500"/>
<dbReference type="ChEMBL" id="CHEMBL3892"/>
<dbReference type="DrugBank" id="DB08868">
    <property type="generic name" value="Fingolimod"/>
</dbReference>
<dbReference type="DrugCentral" id="Q99500"/>
<dbReference type="GuidetoPHARMACOLOGY" id="277"/>
<dbReference type="GlyCosmos" id="Q99500">
    <property type="glycosylation" value="1 site, No reported glycans"/>
</dbReference>
<dbReference type="GlyGen" id="Q99500">
    <property type="glycosylation" value="2 sites, 1 O-linked glycan (1 site)"/>
</dbReference>
<dbReference type="iPTMnet" id="Q99500"/>
<dbReference type="PhosphoSitePlus" id="Q99500"/>
<dbReference type="BioMuta" id="S1PR3"/>
<dbReference type="DMDM" id="42560554"/>
<dbReference type="jPOST" id="Q99500"/>
<dbReference type="MassIVE" id="Q99500"/>
<dbReference type="PaxDb" id="9606-ENSP00000365006"/>
<dbReference type="PeptideAtlas" id="Q99500"/>
<dbReference type="ProteomicsDB" id="78299"/>
<dbReference type="ABCD" id="Q99500">
    <property type="antibodies" value="1 sequenced antibody"/>
</dbReference>
<dbReference type="Antibodypedia" id="13485">
    <property type="antibodies" value="546 antibodies from 36 providers"/>
</dbReference>
<dbReference type="DNASU" id="1903"/>
<dbReference type="Ensembl" id="ENST00000358157.3">
    <property type="protein sequence ID" value="ENSP00000350878.2"/>
    <property type="gene ID" value="ENSG00000213694.7"/>
</dbReference>
<dbReference type="Ensembl" id="ENST00000375846.3">
    <property type="protein sequence ID" value="ENSP00000365006.3"/>
    <property type="gene ID" value="ENSG00000213694.7"/>
</dbReference>
<dbReference type="GeneID" id="1903"/>
<dbReference type="KEGG" id="hsa:1903"/>
<dbReference type="MANE-Select" id="ENST00000358157.3">
    <property type="protein sequence ID" value="ENSP00000350878.2"/>
    <property type="RefSeq nucleotide sequence ID" value="NM_005226.4"/>
    <property type="RefSeq protein sequence ID" value="NP_005217.2"/>
</dbReference>
<dbReference type="UCSC" id="uc004aqe.5">
    <property type="organism name" value="human"/>
</dbReference>
<dbReference type="AGR" id="HGNC:3167"/>
<dbReference type="CTD" id="1903"/>
<dbReference type="DisGeNET" id="1903"/>
<dbReference type="GeneCards" id="S1PR3"/>
<dbReference type="HGNC" id="HGNC:3167">
    <property type="gene designation" value="S1PR3"/>
</dbReference>
<dbReference type="HPA" id="ENSG00000213694">
    <property type="expression patterns" value="Low tissue specificity"/>
</dbReference>
<dbReference type="MIM" id="601965">
    <property type="type" value="gene"/>
</dbReference>
<dbReference type="neXtProt" id="NX_Q99500"/>
<dbReference type="OpenTargets" id="ENSG00000213694"/>
<dbReference type="PharmGKB" id="PA162402362"/>
<dbReference type="VEuPathDB" id="HostDB:ENSG00000213694"/>
<dbReference type="eggNOG" id="ENOG502R61K">
    <property type="taxonomic scope" value="Eukaryota"/>
</dbReference>
<dbReference type="GeneTree" id="ENSGT01050000244887"/>
<dbReference type="HOGENOM" id="CLU_047979_1_0_1"/>
<dbReference type="InParanoid" id="Q99500"/>
<dbReference type="OMA" id="LYTKKYV"/>
<dbReference type="OrthoDB" id="9874984at2759"/>
<dbReference type="PAN-GO" id="Q99500">
    <property type="GO annotations" value="5 GO annotations based on evolutionary models"/>
</dbReference>
<dbReference type="PhylomeDB" id="Q99500"/>
<dbReference type="TreeFam" id="TF330052"/>
<dbReference type="PathwayCommons" id="Q99500"/>
<dbReference type="Reactome" id="R-HSA-418594">
    <property type="pathway name" value="G alpha (i) signalling events"/>
</dbReference>
<dbReference type="Reactome" id="R-HSA-419408">
    <property type="pathway name" value="Lysosphingolipid and LPA receptors"/>
</dbReference>
<dbReference type="Reactome" id="R-HSA-9009391">
    <property type="pathway name" value="Extra-nuclear estrogen signaling"/>
</dbReference>
<dbReference type="SignaLink" id="Q99500"/>
<dbReference type="SIGNOR" id="Q99500"/>
<dbReference type="BioGRID-ORCS" id="1903">
    <property type="hits" value="15 hits in 1149 CRISPR screens"/>
</dbReference>
<dbReference type="ChiTaRS" id="S1PR3">
    <property type="organism name" value="human"/>
</dbReference>
<dbReference type="GeneWiki" id="S1PR3"/>
<dbReference type="GenomeRNAi" id="1903"/>
<dbReference type="Pharos" id="Q99500">
    <property type="development level" value="Tclin"/>
</dbReference>
<dbReference type="PRO" id="PR:Q99500"/>
<dbReference type="Proteomes" id="UP000005640">
    <property type="component" value="Chromosome 9"/>
</dbReference>
<dbReference type="RNAct" id="Q99500">
    <property type="molecule type" value="protein"/>
</dbReference>
<dbReference type="Bgee" id="ENSG00000213694">
    <property type="expression patterns" value="Expressed in left ventricle myocardium and 174 other cell types or tissues"/>
</dbReference>
<dbReference type="ExpressionAtlas" id="Q99500">
    <property type="expression patterns" value="baseline and differential"/>
</dbReference>
<dbReference type="GO" id="GO:0005737">
    <property type="term" value="C:cytoplasm"/>
    <property type="evidence" value="ECO:0000318"/>
    <property type="project" value="GO_Central"/>
</dbReference>
<dbReference type="GO" id="GO:0005886">
    <property type="term" value="C:plasma membrane"/>
    <property type="evidence" value="ECO:0000314"/>
    <property type="project" value="UniProtKB"/>
</dbReference>
<dbReference type="GO" id="GO:0098793">
    <property type="term" value="C:presynapse"/>
    <property type="evidence" value="ECO:0007669"/>
    <property type="project" value="Ensembl"/>
</dbReference>
<dbReference type="GO" id="GO:0004930">
    <property type="term" value="F:G protein-coupled receptor activity"/>
    <property type="evidence" value="ECO:0000318"/>
    <property type="project" value="GO_Central"/>
</dbReference>
<dbReference type="GO" id="GO:0005178">
    <property type="term" value="F:integrin binding"/>
    <property type="evidence" value="ECO:0000353"/>
    <property type="project" value="UniProtKB"/>
</dbReference>
<dbReference type="GO" id="GO:0008289">
    <property type="term" value="F:lipid binding"/>
    <property type="evidence" value="ECO:0000304"/>
    <property type="project" value="ProtInc"/>
</dbReference>
<dbReference type="GO" id="GO:0038036">
    <property type="term" value="F:sphingosine-1-phosphate receptor activity"/>
    <property type="evidence" value="ECO:0007669"/>
    <property type="project" value="InterPro"/>
</dbReference>
<dbReference type="GO" id="GO:0007189">
    <property type="term" value="P:adenylate cyclase-activating G protein-coupled receptor signaling pathway"/>
    <property type="evidence" value="ECO:0000318"/>
    <property type="project" value="GO_Central"/>
</dbReference>
<dbReference type="GO" id="GO:0007193">
    <property type="term" value="P:adenylate cyclase-inhibiting G protein-coupled receptor signaling pathway"/>
    <property type="evidence" value="ECO:0007669"/>
    <property type="project" value="Ensembl"/>
</dbReference>
<dbReference type="GO" id="GO:0009653">
    <property type="term" value="P:anatomical structure morphogenesis"/>
    <property type="evidence" value="ECO:0000304"/>
    <property type="project" value="ProtInc"/>
</dbReference>
<dbReference type="GO" id="GO:0007186">
    <property type="term" value="P:G protein-coupled receptor signaling pathway"/>
    <property type="evidence" value="ECO:0000304"/>
    <property type="project" value="ProtInc"/>
</dbReference>
<dbReference type="GO" id="GO:0006954">
    <property type="term" value="P:inflammatory response"/>
    <property type="evidence" value="ECO:0000304"/>
    <property type="project" value="ProtInc"/>
</dbReference>
<dbReference type="GO" id="GO:1903141">
    <property type="term" value="P:negative regulation of establishment of endothelial barrier"/>
    <property type="evidence" value="ECO:0000315"/>
    <property type="project" value="UniProtKB"/>
</dbReference>
<dbReference type="GO" id="GO:0007219">
    <property type="term" value="P:Notch signaling pathway"/>
    <property type="evidence" value="ECO:0007669"/>
    <property type="project" value="Ensembl"/>
</dbReference>
<dbReference type="GO" id="GO:0008284">
    <property type="term" value="P:positive regulation of cell population proliferation"/>
    <property type="evidence" value="ECO:0000304"/>
    <property type="project" value="ProtInc"/>
</dbReference>
<dbReference type="GO" id="GO:0007204">
    <property type="term" value="P:positive regulation of cytosolic calcium ion concentration"/>
    <property type="evidence" value="ECO:0000304"/>
    <property type="project" value="ProtInc"/>
</dbReference>
<dbReference type="GO" id="GO:0032651">
    <property type="term" value="P:regulation of interleukin-1 beta production"/>
    <property type="evidence" value="ECO:0007669"/>
    <property type="project" value="Ensembl"/>
</dbReference>
<dbReference type="GO" id="GO:0019222">
    <property type="term" value="P:regulation of metabolic process"/>
    <property type="evidence" value="ECO:0000318"/>
    <property type="project" value="GO_Central"/>
</dbReference>
<dbReference type="CDD" id="cd15345">
    <property type="entry name" value="7tmA_S1PR3_Edg3"/>
    <property type="match status" value="1"/>
</dbReference>
<dbReference type="FunFam" id="1.20.1070.10:FF:000098">
    <property type="entry name" value="Sphingosine 1-phosphate receptor 1"/>
    <property type="match status" value="1"/>
</dbReference>
<dbReference type="Gene3D" id="1.20.1070.10">
    <property type="entry name" value="Rhodopsin 7-helix transmembrane proteins"/>
    <property type="match status" value="1"/>
</dbReference>
<dbReference type="InterPro" id="IPR004062">
    <property type="entry name" value="EDG3_rcpt"/>
</dbReference>
<dbReference type="InterPro" id="IPR000276">
    <property type="entry name" value="GPCR_Rhodpsn"/>
</dbReference>
<dbReference type="InterPro" id="IPR017452">
    <property type="entry name" value="GPCR_Rhodpsn_7TM"/>
</dbReference>
<dbReference type="InterPro" id="IPR004061">
    <property type="entry name" value="S1P_rcpt"/>
</dbReference>
<dbReference type="PANTHER" id="PTHR22750">
    <property type="entry name" value="G-PROTEIN COUPLED RECEPTOR"/>
    <property type="match status" value="1"/>
</dbReference>
<dbReference type="Pfam" id="PF00001">
    <property type="entry name" value="7tm_1"/>
    <property type="match status" value="1"/>
</dbReference>
<dbReference type="PRINTS" id="PR01524">
    <property type="entry name" value="EDG3RECEPTOR"/>
</dbReference>
<dbReference type="PRINTS" id="PR00237">
    <property type="entry name" value="GPCRRHODOPSN"/>
</dbReference>
<dbReference type="PRINTS" id="PR01523">
    <property type="entry name" value="S1PRECEPTOR"/>
</dbReference>
<dbReference type="SMART" id="SM01381">
    <property type="entry name" value="7TM_GPCR_Srsx"/>
    <property type="match status" value="1"/>
</dbReference>
<dbReference type="SUPFAM" id="SSF81321">
    <property type="entry name" value="Family A G protein-coupled receptor-like"/>
    <property type="match status" value="1"/>
</dbReference>
<dbReference type="PROSITE" id="PS00237">
    <property type="entry name" value="G_PROTEIN_RECEP_F1_1"/>
    <property type="match status" value="1"/>
</dbReference>
<dbReference type="PROSITE" id="PS50262">
    <property type="entry name" value="G_PROTEIN_RECEP_F1_2"/>
    <property type="match status" value="1"/>
</dbReference>
<sequence length="378" mass="42250">MATALPPRLQPVRGNETLREHYQYVGKLAGRLKEASEGSTLTTVLFLVICSFIVLENLMVLIAIWKNNKFHNRMYFFIGNLALCDLLAGIAYKVNILMSGKKTFSLSPTVWFLREGSMFVALGASTCSLLAIAIERHLTMIKMRPYDANKRHRVFLLIGMCWLIAFTLGALPILGWNCLHNLPDCSTILPLYSKKYIAFCISIFTAILVTIVILYARIYFLVKSSSRKVANHNNSERSMALLRTVVIVVSVFIACWSPLFILFLIDVACRVQACPILFKAQWFIVLAVLNSAMNPVIYTLASKEMRRAFFRLVCNCLVRGRGARASPIQPALDPSRSKSSSSNNSSHSPKVKEDLPHTAPSSCIMDKNAALQNGIFCN</sequence>
<gene>
    <name evidence="7" type="primary">S1PR3</name>
    <name evidence="7" type="synonym">C9orf108</name>
    <name evidence="7" type="synonym">C9orf47</name>
    <name evidence="7" type="synonym">EDG3</name>
</gene>
<protein>
    <recommendedName>
        <fullName>Sphingosine 1-phosphate receptor 3</fullName>
        <shortName>S1P receptor 3</shortName>
        <shortName>S1P3</shortName>
    </recommendedName>
    <alternativeName>
        <fullName>Endothelial differentiation G-protein coupled receptor 3</fullName>
    </alternativeName>
    <alternativeName>
        <fullName>Sphingosine 1-phosphate receptor Edg-3</fullName>
        <shortName>S1P receptor Edg-3</shortName>
    </alternativeName>
</protein>
<comment type="function">
    <text evidence="5">Receptor for the lysosphingolipid sphingosine 1-phosphate (S1P). S1P is a bioactive lysophospholipid that elicits diverse physiological effect on most types of cells and tissues. When expressed in rat HTC4 hepatoma cells, is capable of mediating S1P-induced cell proliferation and suppression of apoptosis.</text>
</comment>
<comment type="interaction">
    <interactant intactId="EBI-10634734">
        <id>Q99500</id>
    </interactant>
    <interactant intactId="EBI-372265">
        <id>P21964</id>
        <label>COMT</label>
    </interactant>
    <organismsDiffer>false</organismsDiffer>
    <experiments>3</experiments>
</comment>
<comment type="interaction">
    <interactant intactId="EBI-10634734">
        <id>Q99500</id>
    </interactant>
    <interactant intactId="EBI-10194756">
        <id>P06028</id>
        <label>GYPB</label>
    </interactant>
    <organismsDiffer>false</organismsDiffer>
    <experiments>3</experiments>
</comment>
<comment type="interaction">
    <interactant intactId="EBI-10634734">
        <id>Q99500</id>
    </interactant>
    <interactant intactId="EBI-948678">
        <id>P16144</id>
        <label>ITGB4</label>
    </interactant>
    <organismsDiffer>false</organismsDiffer>
    <experiments>3</experiments>
</comment>
<comment type="subcellular location">
    <subcellularLocation>
        <location>Cell membrane</location>
        <topology>Multi-pass membrane protein</topology>
    </subcellularLocation>
</comment>
<comment type="tissue specificity">
    <text>Expressed in all tissues, but most abundantly in heart, placenta, kidney, and liver.</text>
</comment>
<comment type="similarity">
    <text evidence="3">Belongs to the G-protein coupled receptor 1 family.</text>
</comment>
<reference key="1">
    <citation type="journal article" date="1996" name="Biochem. Biophys. Res. Commun.">
        <title>Molecular cloning of the novel human G protein-coupled receptor (GPCR) gene mapped on chromosome 9.</title>
        <authorList>
            <person name="Yamaguchi F."/>
            <person name="Tokuda M."/>
            <person name="Hatase O."/>
            <person name="Brenner S."/>
        </authorList>
    </citation>
    <scope>NUCLEOTIDE SEQUENCE [GENOMIC DNA]</scope>
    <source>
        <tissue>Placenta</tissue>
    </source>
</reference>
<reference key="2">
    <citation type="journal article" date="1997" name="FEBS Lett.">
        <title>Identification of cDNAs encoding two G protein-coupled receptors for lysosphingolipids.</title>
        <authorList>
            <person name="An S."/>
            <person name="Bleu T."/>
            <person name="Huang W."/>
            <person name="Hallmark O.G."/>
            <person name="Coughlin S.R."/>
            <person name="Goetzl E.J."/>
        </authorList>
    </citation>
    <scope>NUCLEOTIDE SEQUENCE [MRNA]</scope>
    <source>
        <tissue>Brain</tissue>
    </source>
</reference>
<reference key="3">
    <citation type="submission" date="2003-06" db="EMBL/GenBank/DDBJ databases">
        <title>cDNA clones of human proteins involved in signal transduction sequenced by the Guthrie cDNA resource center (www.cdna.org).</title>
        <authorList>
            <person name="Kopatz S.A."/>
            <person name="Aronstam R.S."/>
            <person name="Sharma S.V."/>
        </authorList>
    </citation>
    <scope>NUCLEOTIDE SEQUENCE [GENOMIC DNA]</scope>
</reference>
<reference key="4">
    <citation type="journal article" date="2004" name="Nat. Genet.">
        <title>Complete sequencing and characterization of 21,243 full-length human cDNAs.</title>
        <authorList>
            <person name="Ota T."/>
            <person name="Suzuki Y."/>
            <person name="Nishikawa T."/>
            <person name="Otsuki T."/>
            <person name="Sugiyama T."/>
            <person name="Irie R."/>
            <person name="Wakamatsu A."/>
            <person name="Hayashi K."/>
            <person name="Sato H."/>
            <person name="Nagai K."/>
            <person name="Kimura K."/>
            <person name="Makita H."/>
            <person name="Sekine M."/>
            <person name="Obayashi M."/>
            <person name="Nishi T."/>
            <person name="Shibahara T."/>
            <person name="Tanaka T."/>
            <person name="Ishii S."/>
            <person name="Yamamoto J."/>
            <person name="Saito K."/>
            <person name="Kawai Y."/>
            <person name="Isono Y."/>
            <person name="Nakamura Y."/>
            <person name="Nagahari K."/>
            <person name="Murakami K."/>
            <person name="Yasuda T."/>
            <person name="Iwayanagi T."/>
            <person name="Wagatsuma M."/>
            <person name="Shiratori A."/>
            <person name="Sudo H."/>
            <person name="Hosoiri T."/>
            <person name="Kaku Y."/>
            <person name="Kodaira H."/>
            <person name="Kondo H."/>
            <person name="Sugawara M."/>
            <person name="Takahashi M."/>
            <person name="Kanda K."/>
            <person name="Yokoi T."/>
            <person name="Furuya T."/>
            <person name="Kikkawa E."/>
            <person name="Omura Y."/>
            <person name="Abe K."/>
            <person name="Kamihara K."/>
            <person name="Katsuta N."/>
            <person name="Sato K."/>
            <person name="Tanikawa M."/>
            <person name="Yamazaki M."/>
            <person name="Ninomiya K."/>
            <person name="Ishibashi T."/>
            <person name="Yamashita H."/>
            <person name="Murakawa K."/>
            <person name="Fujimori K."/>
            <person name="Tanai H."/>
            <person name="Kimata M."/>
            <person name="Watanabe M."/>
            <person name="Hiraoka S."/>
            <person name="Chiba Y."/>
            <person name="Ishida S."/>
            <person name="Ono Y."/>
            <person name="Takiguchi S."/>
            <person name="Watanabe S."/>
            <person name="Yosida M."/>
            <person name="Hotuta T."/>
            <person name="Kusano J."/>
            <person name="Kanehori K."/>
            <person name="Takahashi-Fujii A."/>
            <person name="Hara H."/>
            <person name="Tanase T.-O."/>
            <person name="Nomura Y."/>
            <person name="Togiya S."/>
            <person name="Komai F."/>
            <person name="Hara R."/>
            <person name="Takeuchi K."/>
            <person name="Arita M."/>
            <person name="Imose N."/>
            <person name="Musashino K."/>
            <person name="Yuuki H."/>
            <person name="Oshima A."/>
            <person name="Sasaki N."/>
            <person name="Aotsuka S."/>
            <person name="Yoshikawa Y."/>
            <person name="Matsunawa H."/>
            <person name="Ichihara T."/>
            <person name="Shiohata N."/>
            <person name="Sano S."/>
            <person name="Moriya S."/>
            <person name="Momiyama H."/>
            <person name="Satoh N."/>
            <person name="Takami S."/>
            <person name="Terashima Y."/>
            <person name="Suzuki O."/>
            <person name="Nakagawa S."/>
            <person name="Senoh A."/>
            <person name="Mizoguchi H."/>
            <person name="Goto Y."/>
            <person name="Shimizu F."/>
            <person name="Wakebe H."/>
            <person name="Hishigaki H."/>
            <person name="Watanabe T."/>
            <person name="Sugiyama A."/>
            <person name="Takemoto M."/>
            <person name="Kawakami B."/>
            <person name="Yamazaki M."/>
            <person name="Watanabe K."/>
            <person name="Kumagai A."/>
            <person name="Itakura S."/>
            <person name="Fukuzumi Y."/>
            <person name="Fujimori Y."/>
            <person name="Komiyama M."/>
            <person name="Tashiro H."/>
            <person name="Tanigami A."/>
            <person name="Fujiwara T."/>
            <person name="Ono T."/>
            <person name="Yamada K."/>
            <person name="Fujii Y."/>
            <person name="Ozaki K."/>
            <person name="Hirao M."/>
            <person name="Ohmori Y."/>
            <person name="Kawabata A."/>
            <person name="Hikiji T."/>
            <person name="Kobatake N."/>
            <person name="Inagaki H."/>
            <person name="Ikema Y."/>
            <person name="Okamoto S."/>
            <person name="Okitani R."/>
            <person name="Kawakami T."/>
            <person name="Noguchi S."/>
            <person name="Itoh T."/>
            <person name="Shigeta K."/>
            <person name="Senba T."/>
            <person name="Matsumura K."/>
            <person name="Nakajima Y."/>
            <person name="Mizuno T."/>
            <person name="Morinaga M."/>
            <person name="Sasaki M."/>
            <person name="Togashi T."/>
            <person name="Oyama M."/>
            <person name="Hata H."/>
            <person name="Watanabe M."/>
            <person name="Komatsu T."/>
            <person name="Mizushima-Sugano J."/>
            <person name="Satoh T."/>
            <person name="Shirai Y."/>
            <person name="Takahashi Y."/>
            <person name="Nakagawa K."/>
            <person name="Okumura K."/>
            <person name="Nagase T."/>
            <person name="Nomura N."/>
            <person name="Kikuchi H."/>
            <person name="Masuho Y."/>
            <person name="Yamashita R."/>
            <person name="Nakai K."/>
            <person name="Yada T."/>
            <person name="Nakamura Y."/>
            <person name="Ohara O."/>
            <person name="Isogai T."/>
            <person name="Sugano S."/>
        </authorList>
    </citation>
    <scope>NUCLEOTIDE SEQUENCE [LARGE SCALE MRNA]</scope>
    <source>
        <tissue>Testis</tissue>
    </source>
</reference>
<reference key="5">
    <citation type="journal article" date="2004" name="Nature">
        <title>DNA sequence and analysis of human chromosome 9.</title>
        <authorList>
            <person name="Humphray S.J."/>
            <person name="Oliver K."/>
            <person name="Hunt A.R."/>
            <person name="Plumb R.W."/>
            <person name="Loveland J.E."/>
            <person name="Howe K.L."/>
            <person name="Andrews T.D."/>
            <person name="Searle S."/>
            <person name="Hunt S.E."/>
            <person name="Scott C.E."/>
            <person name="Jones M.C."/>
            <person name="Ainscough R."/>
            <person name="Almeida J.P."/>
            <person name="Ambrose K.D."/>
            <person name="Ashwell R.I.S."/>
            <person name="Babbage A.K."/>
            <person name="Babbage S."/>
            <person name="Bagguley C.L."/>
            <person name="Bailey J."/>
            <person name="Banerjee R."/>
            <person name="Barker D.J."/>
            <person name="Barlow K.F."/>
            <person name="Bates K."/>
            <person name="Beasley H."/>
            <person name="Beasley O."/>
            <person name="Bird C.P."/>
            <person name="Bray-Allen S."/>
            <person name="Brown A.J."/>
            <person name="Brown J.Y."/>
            <person name="Burford D."/>
            <person name="Burrill W."/>
            <person name="Burton J."/>
            <person name="Carder C."/>
            <person name="Carter N.P."/>
            <person name="Chapman J.C."/>
            <person name="Chen Y."/>
            <person name="Clarke G."/>
            <person name="Clark S.Y."/>
            <person name="Clee C.M."/>
            <person name="Clegg S."/>
            <person name="Collier R.E."/>
            <person name="Corby N."/>
            <person name="Crosier M."/>
            <person name="Cummings A.T."/>
            <person name="Davies J."/>
            <person name="Dhami P."/>
            <person name="Dunn M."/>
            <person name="Dutta I."/>
            <person name="Dyer L.W."/>
            <person name="Earthrowl M.E."/>
            <person name="Faulkner L."/>
            <person name="Fleming C.J."/>
            <person name="Frankish A."/>
            <person name="Frankland J.A."/>
            <person name="French L."/>
            <person name="Fricker D.G."/>
            <person name="Garner P."/>
            <person name="Garnett J."/>
            <person name="Ghori J."/>
            <person name="Gilbert J.G.R."/>
            <person name="Glison C."/>
            <person name="Grafham D.V."/>
            <person name="Gribble S."/>
            <person name="Griffiths C."/>
            <person name="Griffiths-Jones S."/>
            <person name="Grocock R."/>
            <person name="Guy J."/>
            <person name="Hall R.E."/>
            <person name="Hammond S."/>
            <person name="Harley J.L."/>
            <person name="Harrison E.S.I."/>
            <person name="Hart E.A."/>
            <person name="Heath P.D."/>
            <person name="Henderson C.D."/>
            <person name="Hopkins B.L."/>
            <person name="Howard P.J."/>
            <person name="Howden P.J."/>
            <person name="Huckle E."/>
            <person name="Johnson C."/>
            <person name="Johnson D."/>
            <person name="Joy A.A."/>
            <person name="Kay M."/>
            <person name="Keenan S."/>
            <person name="Kershaw J.K."/>
            <person name="Kimberley A.M."/>
            <person name="King A."/>
            <person name="Knights A."/>
            <person name="Laird G.K."/>
            <person name="Langford C."/>
            <person name="Lawlor S."/>
            <person name="Leongamornlert D.A."/>
            <person name="Leversha M."/>
            <person name="Lloyd C."/>
            <person name="Lloyd D.M."/>
            <person name="Lovell J."/>
            <person name="Martin S."/>
            <person name="Mashreghi-Mohammadi M."/>
            <person name="Matthews L."/>
            <person name="McLaren S."/>
            <person name="McLay K.E."/>
            <person name="McMurray A."/>
            <person name="Milne S."/>
            <person name="Nickerson T."/>
            <person name="Nisbett J."/>
            <person name="Nordsiek G."/>
            <person name="Pearce A.V."/>
            <person name="Peck A.I."/>
            <person name="Porter K.M."/>
            <person name="Pandian R."/>
            <person name="Pelan S."/>
            <person name="Phillimore B."/>
            <person name="Povey S."/>
            <person name="Ramsey Y."/>
            <person name="Rand V."/>
            <person name="Scharfe M."/>
            <person name="Sehra H.K."/>
            <person name="Shownkeen R."/>
            <person name="Sims S.K."/>
            <person name="Skuce C.D."/>
            <person name="Smith M."/>
            <person name="Steward C.A."/>
            <person name="Swarbreck D."/>
            <person name="Sycamore N."/>
            <person name="Tester J."/>
            <person name="Thorpe A."/>
            <person name="Tracey A."/>
            <person name="Tromans A."/>
            <person name="Thomas D.W."/>
            <person name="Wall M."/>
            <person name="Wallis J.M."/>
            <person name="West A.P."/>
            <person name="Whitehead S.L."/>
            <person name="Willey D.L."/>
            <person name="Williams S.A."/>
            <person name="Wilming L."/>
            <person name="Wray P.W."/>
            <person name="Young L."/>
            <person name="Ashurst J.L."/>
            <person name="Coulson A."/>
            <person name="Blocker H."/>
            <person name="Durbin R.M."/>
            <person name="Sulston J.E."/>
            <person name="Hubbard T."/>
            <person name="Jackson M.J."/>
            <person name="Bentley D.R."/>
            <person name="Beck S."/>
            <person name="Rogers J."/>
            <person name="Dunham I."/>
        </authorList>
    </citation>
    <scope>NUCLEOTIDE SEQUENCE [LARGE SCALE GENOMIC DNA]</scope>
</reference>
<reference key="6">
    <citation type="submission" date="2005-07" db="EMBL/GenBank/DDBJ databases">
        <authorList>
            <person name="Mural R.J."/>
            <person name="Istrail S."/>
            <person name="Sutton G.G."/>
            <person name="Florea L."/>
            <person name="Halpern A.L."/>
            <person name="Mobarry C.M."/>
            <person name="Lippert R."/>
            <person name="Walenz B."/>
            <person name="Shatkay H."/>
            <person name="Dew I."/>
            <person name="Miller J.R."/>
            <person name="Flanigan M.J."/>
            <person name="Edwards N.J."/>
            <person name="Bolanos R."/>
            <person name="Fasulo D."/>
            <person name="Halldorsson B.V."/>
            <person name="Hannenhalli S."/>
            <person name="Turner R."/>
            <person name="Yooseph S."/>
            <person name="Lu F."/>
            <person name="Nusskern D.R."/>
            <person name="Shue B.C."/>
            <person name="Zheng X.H."/>
            <person name="Zhong F."/>
            <person name="Delcher A.L."/>
            <person name="Huson D.H."/>
            <person name="Kravitz S.A."/>
            <person name="Mouchard L."/>
            <person name="Reinert K."/>
            <person name="Remington K.A."/>
            <person name="Clark A.G."/>
            <person name="Waterman M.S."/>
            <person name="Eichler E.E."/>
            <person name="Adams M.D."/>
            <person name="Hunkapiller M.W."/>
            <person name="Myers E.W."/>
            <person name="Venter J.C."/>
        </authorList>
    </citation>
    <scope>NUCLEOTIDE SEQUENCE [LARGE SCALE GENOMIC DNA]</scope>
</reference>
<reference key="7">
    <citation type="journal article" date="2004" name="Genome Res.">
        <title>The status, quality, and expansion of the NIH full-length cDNA project: the Mammalian Gene Collection (MGC).</title>
        <authorList>
            <consortium name="The MGC Project Team"/>
        </authorList>
    </citation>
    <scope>NUCLEOTIDE SEQUENCE [LARGE SCALE MRNA]</scope>
    <source>
        <tissue>Placenta</tissue>
    </source>
</reference>
<reference key="8">
    <citation type="journal article" date="1999" name="J. Biol. Chem.">
        <title>Differential pharmacological properties and signal transduction of the sphingosine 1-phosphate receptors EDG-1, EDG-3, and EDG-5.</title>
        <authorList>
            <person name="Ancellin N."/>
            <person name="Hla T."/>
        </authorList>
    </citation>
    <scope>PHARMACOLOGICAL CHARACTERIZATION</scope>
</reference>
<reference key="9">
    <citation type="journal article" date="2000" name="J. Biol. Chem.">
        <title>Sphingosine 1-phosphate-induced cell proliferation, survival, and related signaling events mediated by G protein-coupled receptors Edg3 and Edg5.</title>
        <authorList>
            <person name="An S."/>
            <person name="Zheng Y."/>
            <person name="Bleu T."/>
        </authorList>
    </citation>
    <scope>FUNCTION</scope>
</reference>
<reference key="10">
    <citation type="journal article" date="2000" name="Mol. Pharmacol.">
        <title>Evidence for Edg-3 receptor-mediated activation of I(K.ACh) by sphingosine-1-phosphate in human atrial cardiomyocytes.</title>
        <authorList>
            <person name="Himmel H.M."/>
            <person name="Meyer Zu Heringdorf D."/>
            <person name="Graf E."/>
            <person name="Dobrev D."/>
            <person name="Kortner A."/>
            <person name="Schueler S."/>
            <person name="Jakobs K.H."/>
            <person name="Ravens U."/>
        </authorList>
    </citation>
    <scope>SPHINGOSINE 1-PHOSPHATE ACTIVATION</scope>
</reference>
<reference key="11">
    <citation type="journal article" date="2013" name="J. Proteome Res.">
        <title>Toward a comprehensive characterization of a human cancer cell phosphoproteome.</title>
        <authorList>
            <person name="Zhou H."/>
            <person name="Di Palma S."/>
            <person name="Preisinger C."/>
            <person name="Peng M."/>
            <person name="Polat A.N."/>
            <person name="Heck A.J."/>
            <person name="Mohammed S."/>
        </authorList>
    </citation>
    <scope>PHOSPHORYLATION [LARGE SCALE ANALYSIS] AT SER-326</scope>
    <scope>IDENTIFICATION BY MASS SPECTROMETRY [LARGE SCALE ANALYSIS]</scope>
    <source>
        <tissue>Cervix carcinoma</tissue>
    </source>
</reference>
<evidence type="ECO:0000250" key="1"/>
<evidence type="ECO:0000255" key="2"/>
<evidence type="ECO:0000255" key="3">
    <source>
        <dbReference type="PROSITE-ProRule" id="PRU00521"/>
    </source>
</evidence>
<evidence type="ECO:0000256" key="4">
    <source>
        <dbReference type="SAM" id="MobiDB-lite"/>
    </source>
</evidence>
<evidence type="ECO:0000269" key="5">
    <source>
    </source>
</evidence>
<evidence type="ECO:0000305" key="6"/>
<evidence type="ECO:0000312" key="7">
    <source>
        <dbReference type="HGNC" id="HGNC:3167"/>
    </source>
</evidence>
<evidence type="ECO:0007744" key="8">
    <source>
    </source>
</evidence>
<evidence type="ECO:0007829" key="9">
    <source>
        <dbReference type="PDB" id="7C4S"/>
    </source>
</evidence>
<evidence type="ECO:0007829" key="10">
    <source>
        <dbReference type="PDB" id="7EW2"/>
    </source>
</evidence>
<evidence type="ECO:0007829" key="11">
    <source>
        <dbReference type="PDB" id="7EW3"/>
    </source>
</evidence>
<evidence type="ECO:0007829" key="12">
    <source>
        <dbReference type="PDB" id="7EW4"/>
    </source>
</evidence>